<comment type="function">
    <text evidence="1">Catalyzes the reversible isomerization-deamination of glucosamine 6-phosphate (GlcN6P) to form fructose 6-phosphate (Fru6P) and ammonium ion.</text>
</comment>
<comment type="catalytic activity">
    <reaction evidence="1">
        <text>alpha-D-glucosamine 6-phosphate + H2O = beta-D-fructose 6-phosphate + NH4(+)</text>
        <dbReference type="Rhea" id="RHEA:12172"/>
        <dbReference type="ChEBI" id="CHEBI:15377"/>
        <dbReference type="ChEBI" id="CHEBI:28938"/>
        <dbReference type="ChEBI" id="CHEBI:57634"/>
        <dbReference type="ChEBI" id="CHEBI:75989"/>
        <dbReference type="EC" id="3.5.99.6"/>
    </reaction>
</comment>
<comment type="activity regulation">
    <text evidence="1">Allosterically activated by N-acetylglucosamine 6-phosphate (GlcNAc6P).</text>
</comment>
<comment type="pathway">
    <text evidence="1">Amino-sugar metabolism; N-acetylneuraminate degradation; D-fructose 6-phosphate from N-acetylneuraminate: step 5/5.</text>
</comment>
<comment type="subunit">
    <text evidence="1">Homohexamer.</text>
</comment>
<comment type="similarity">
    <text evidence="1">Belongs to the glucosamine/galactosamine-6-phosphate isomerase family. NagB subfamily.</text>
</comment>
<reference key="1">
    <citation type="journal article" date="2005" name="J. Bacteriol.">
        <title>Genomic sequence of an otitis media isolate of nontypeable Haemophilus influenzae: comparative study with H. influenzae serotype d, strain KW20.</title>
        <authorList>
            <person name="Harrison A."/>
            <person name="Dyer D.W."/>
            <person name="Gillaspy A."/>
            <person name="Ray W.C."/>
            <person name="Mungur R."/>
            <person name="Carson M.B."/>
            <person name="Zhong H."/>
            <person name="Gipson J."/>
            <person name="Gipson M."/>
            <person name="Johnson L.S."/>
            <person name="Lewis L."/>
            <person name="Bakaletz L.O."/>
            <person name="Munson R.S. Jr."/>
        </authorList>
    </citation>
    <scope>NUCLEOTIDE SEQUENCE [LARGE SCALE GENOMIC DNA]</scope>
    <source>
        <strain>86-028NP</strain>
    </source>
</reference>
<organism>
    <name type="scientific">Haemophilus influenzae (strain 86-028NP)</name>
    <dbReference type="NCBI Taxonomy" id="281310"/>
    <lineage>
        <taxon>Bacteria</taxon>
        <taxon>Pseudomonadati</taxon>
        <taxon>Pseudomonadota</taxon>
        <taxon>Gammaproteobacteria</taxon>
        <taxon>Pasteurellales</taxon>
        <taxon>Pasteurellaceae</taxon>
        <taxon>Haemophilus</taxon>
    </lineage>
</organism>
<proteinExistence type="evidence at protein level"/>
<name>NAGB_HAEI8</name>
<dbReference type="EC" id="3.5.99.6" evidence="1"/>
<dbReference type="EMBL" id="CP000057">
    <property type="protein sequence ID" value="AAX87201.1"/>
    <property type="molecule type" value="Genomic_DNA"/>
</dbReference>
<dbReference type="RefSeq" id="WP_011271900.1">
    <property type="nucleotide sequence ID" value="NC_007146.2"/>
</dbReference>
<dbReference type="PDB" id="7LQN">
    <property type="method" value="X-ray"/>
    <property type="resolution" value="3.00 A"/>
    <property type="chains" value="A/B/C/D/E/F/G/H/I/J/K/L=1-270"/>
</dbReference>
<dbReference type="PDBsum" id="7LQN"/>
<dbReference type="SMR" id="Q4QP46"/>
<dbReference type="KEGG" id="hit:NTHI0227"/>
<dbReference type="HOGENOM" id="CLU_049611_0_1_6"/>
<dbReference type="UniPathway" id="UPA00629">
    <property type="reaction ID" value="UER00684"/>
</dbReference>
<dbReference type="Proteomes" id="UP000002525">
    <property type="component" value="Chromosome"/>
</dbReference>
<dbReference type="GO" id="GO:0005737">
    <property type="term" value="C:cytoplasm"/>
    <property type="evidence" value="ECO:0007669"/>
    <property type="project" value="TreeGrafter"/>
</dbReference>
<dbReference type="GO" id="GO:0004342">
    <property type="term" value="F:glucosamine-6-phosphate deaminase activity"/>
    <property type="evidence" value="ECO:0007669"/>
    <property type="project" value="UniProtKB-UniRule"/>
</dbReference>
<dbReference type="GO" id="GO:0042802">
    <property type="term" value="F:identical protein binding"/>
    <property type="evidence" value="ECO:0007669"/>
    <property type="project" value="TreeGrafter"/>
</dbReference>
<dbReference type="GO" id="GO:0005975">
    <property type="term" value="P:carbohydrate metabolic process"/>
    <property type="evidence" value="ECO:0007669"/>
    <property type="project" value="InterPro"/>
</dbReference>
<dbReference type="GO" id="GO:0006043">
    <property type="term" value="P:glucosamine catabolic process"/>
    <property type="evidence" value="ECO:0007669"/>
    <property type="project" value="TreeGrafter"/>
</dbReference>
<dbReference type="GO" id="GO:0006046">
    <property type="term" value="P:N-acetylglucosamine catabolic process"/>
    <property type="evidence" value="ECO:0007669"/>
    <property type="project" value="TreeGrafter"/>
</dbReference>
<dbReference type="GO" id="GO:0019262">
    <property type="term" value="P:N-acetylneuraminate catabolic process"/>
    <property type="evidence" value="ECO:0007669"/>
    <property type="project" value="UniProtKB-UniRule"/>
</dbReference>
<dbReference type="CDD" id="cd01399">
    <property type="entry name" value="GlcN6P_deaminase"/>
    <property type="match status" value="1"/>
</dbReference>
<dbReference type="FunFam" id="3.40.50.1360:FF:000002">
    <property type="entry name" value="Glucosamine-6-phosphate deaminase"/>
    <property type="match status" value="1"/>
</dbReference>
<dbReference type="Gene3D" id="3.40.50.1360">
    <property type="match status" value="1"/>
</dbReference>
<dbReference type="HAMAP" id="MF_01241">
    <property type="entry name" value="GlcN6P_deamin"/>
    <property type="match status" value="1"/>
</dbReference>
<dbReference type="InterPro" id="IPR006148">
    <property type="entry name" value="Glc/Gal-6P_isomerase"/>
</dbReference>
<dbReference type="InterPro" id="IPR004547">
    <property type="entry name" value="Glucosamine6P_isomerase"/>
</dbReference>
<dbReference type="InterPro" id="IPR018321">
    <property type="entry name" value="Glucosamine6P_isomerase_CS"/>
</dbReference>
<dbReference type="InterPro" id="IPR037171">
    <property type="entry name" value="NagB/RpiA_transferase-like"/>
</dbReference>
<dbReference type="NCBIfam" id="TIGR00502">
    <property type="entry name" value="nagB"/>
    <property type="match status" value="1"/>
</dbReference>
<dbReference type="PANTHER" id="PTHR11280">
    <property type="entry name" value="GLUCOSAMINE-6-PHOSPHATE ISOMERASE"/>
    <property type="match status" value="1"/>
</dbReference>
<dbReference type="PANTHER" id="PTHR11280:SF5">
    <property type="entry name" value="GLUCOSAMINE-6-PHOSPHATE ISOMERASE"/>
    <property type="match status" value="1"/>
</dbReference>
<dbReference type="Pfam" id="PF01182">
    <property type="entry name" value="Glucosamine_iso"/>
    <property type="match status" value="1"/>
</dbReference>
<dbReference type="SUPFAM" id="SSF100950">
    <property type="entry name" value="NagB/RpiA/CoA transferase-like"/>
    <property type="match status" value="1"/>
</dbReference>
<dbReference type="PROSITE" id="PS01161">
    <property type="entry name" value="GLC_GALNAC_ISOMERASE"/>
    <property type="match status" value="1"/>
</dbReference>
<feature type="chain" id="PRO_1000066985" description="Glucosamine-6-phosphate deaminase">
    <location>
        <begin position="1"/>
        <end position="270"/>
    </location>
</feature>
<feature type="active site" description="Proton acceptor; for enolization step" evidence="1">
    <location>
        <position position="72"/>
    </location>
</feature>
<feature type="active site" description="For ring-opening step" evidence="1">
    <location>
        <position position="141"/>
    </location>
</feature>
<feature type="active site" description="Proton acceptor; for ring-opening step" evidence="1">
    <location>
        <position position="143"/>
    </location>
</feature>
<feature type="active site" description="For ring-opening step" evidence="1">
    <location>
        <position position="148"/>
    </location>
</feature>
<feature type="site" description="Part of the allosteric site" evidence="1">
    <location>
        <position position="151"/>
    </location>
</feature>
<feature type="site" description="Part of the allosteric site" evidence="1">
    <location>
        <position position="158"/>
    </location>
</feature>
<feature type="site" description="Part of the allosteric site" evidence="1">
    <location>
        <position position="160"/>
    </location>
</feature>
<feature type="site" description="Part of the allosteric site" evidence="1">
    <location>
        <position position="161"/>
    </location>
</feature>
<feature type="site" description="Part of the allosteric site" evidence="1">
    <location>
        <position position="254"/>
    </location>
</feature>
<feature type="strand" evidence="2">
    <location>
        <begin position="1"/>
        <end position="5"/>
    </location>
</feature>
<feature type="helix" evidence="2">
    <location>
        <begin position="9"/>
        <end position="27"/>
    </location>
</feature>
<feature type="strand" evidence="2">
    <location>
        <begin position="31"/>
        <end position="33"/>
    </location>
</feature>
<feature type="strand" evidence="2">
    <location>
        <begin position="35"/>
        <end position="39"/>
    </location>
</feature>
<feature type="helix" evidence="2">
    <location>
        <begin position="43"/>
        <end position="57"/>
    </location>
</feature>
<feature type="strand" evidence="2">
    <location>
        <begin position="66"/>
        <end position="77"/>
    </location>
</feature>
<feature type="helix" evidence="2">
    <location>
        <begin position="85"/>
        <end position="92"/>
    </location>
</feature>
<feature type="helix" evidence="2">
    <location>
        <begin position="94"/>
        <end position="96"/>
    </location>
</feature>
<feature type="helix" evidence="2">
    <location>
        <begin position="101"/>
        <end position="103"/>
    </location>
</feature>
<feature type="helix" evidence="2">
    <location>
        <begin position="114"/>
        <end position="128"/>
    </location>
</feature>
<feature type="strand" evidence="2">
    <location>
        <begin position="132"/>
        <end position="137"/>
    </location>
</feature>
<feature type="strand" evidence="2">
    <location>
        <begin position="157"/>
        <end position="161"/>
    </location>
</feature>
<feature type="helix" evidence="2">
    <location>
        <begin position="164"/>
        <end position="170"/>
    </location>
</feature>
<feature type="helix" evidence="2">
    <location>
        <begin position="171"/>
        <end position="173"/>
    </location>
</feature>
<feature type="turn" evidence="2">
    <location>
        <begin position="174"/>
        <end position="176"/>
    </location>
</feature>
<feature type="helix" evidence="2">
    <location>
        <begin position="178"/>
        <end position="180"/>
    </location>
</feature>
<feature type="strand" evidence="2">
    <location>
        <begin position="183"/>
        <end position="187"/>
    </location>
</feature>
<feature type="helix" evidence="2">
    <location>
        <begin position="190"/>
        <end position="194"/>
    </location>
</feature>
<feature type="strand" evidence="2">
    <location>
        <begin position="199"/>
        <end position="203"/>
    </location>
</feature>
<feature type="helix" evidence="2">
    <location>
        <begin position="206"/>
        <end position="208"/>
    </location>
</feature>
<feature type="helix" evidence="2">
    <location>
        <begin position="209"/>
        <end position="216"/>
    </location>
</feature>
<feature type="helix" evidence="2">
    <location>
        <begin position="225"/>
        <end position="231"/>
    </location>
</feature>
<feature type="strand" evidence="2">
    <location>
        <begin position="235"/>
        <end position="239"/>
    </location>
</feature>
<feature type="helix" evidence="2">
    <location>
        <begin position="242"/>
        <end position="244"/>
    </location>
</feature>
<feature type="helix" evidence="2">
    <location>
        <begin position="249"/>
        <end position="258"/>
    </location>
</feature>
<gene>
    <name evidence="1" type="primary">nagB</name>
    <name type="ordered locus">NTHI0227</name>
</gene>
<keyword id="KW-0002">3D-structure</keyword>
<keyword id="KW-0021">Allosteric enzyme</keyword>
<keyword id="KW-0119">Carbohydrate metabolism</keyword>
<keyword id="KW-0378">Hydrolase</keyword>
<evidence type="ECO:0000255" key="1">
    <source>
        <dbReference type="HAMAP-Rule" id="MF_01241"/>
    </source>
</evidence>
<evidence type="ECO:0007829" key="2">
    <source>
        <dbReference type="PDB" id="7LQN"/>
    </source>
</evidence>
<accession>Q4QP46</accession>
<protein>
    <recommendedName>
        <fullName evidence="1">Glucosamine-6-phosphate deaminase</fullName>
        <ecNumber evidence="1">3.5.99.6</ecNumber>
    </recommendedName>
    <alternativeName>
        <fullName evidence="1">GlcN6P deaminase</fullName>
        <shortName evidence="1">GNPDA</shortName>
    </alternativeName>
    <alternativeName>
        <fullName evidence="1">Glucosamine-6-phosphate isomerase</fullName>
    </alternativeName>
</protein>
<sequence length="270" mass="30484">MRFIPLQTEQQVSCWAAQHIINRINDFKPTAERPFVLGLPTGGTPLKTYQELIRLYQAGKVSFKHVVTFNMDEYVALPEEHPESYHSFMYNNFFNHIDILPENINILNGNTDDHNAECHRYEEKIKSYGKIHLFMGGVGVDGHIAFNEPASSLSSRTRIKTLTQDTLIANSRFFNNDVTQVPKYALTIGVGTLLDAEEVMILATGHQKALAVQAAVEGSINHLWTVSALQMHRHFVLVCDEAAQQELKVKTVKYFTELEGSVAGTDYQDK</sequence>